<evidence type="ECO:0000250" key="1"/>
<evidence type="ECO:0000255" key="2"/>
<evidence type="ECO:0000269" key="3">
    <source>
    </source>
</evidence>
<evidence type="ECO:0000269" key="4">
    <source>
    </source>
</evidence>
<evidence type="ECO:0000303" key="5">
    <source>
    </source>
</evidence>
<evidence type="ECO:0000305" key="6"/>
<evidence type="ECO:0000305" key="7">
    <source>
    </source>
</evidence>
<evidence type="ECO:0000312" key="8">
    <source>
        <dbReference type="PDB" id="2LL1"/>
    </source>
</evidence>
<evidence type="ECO:0007829" key="9">
    <source>
        <dbReference type="PDB" id="2LL1"/>
    </source>
</evidence>
<accession>K7N5K9</accession>
<name>TX1_SELPU</name>
<dbReference type="PDB" id="2LL1">
    <property type="method" value="NMR"/>
    <property type="chains" value="A=59-91"/>
</dbReference>
<dbReference type="PDBsum" id="2LL1"/>
<dbReference type="BMRB" id="K7N5K9"/>
<dbReference type="SMR" id="K7N5K9"/>
<dbReference type="ArachnoServer" id="AS001495">
    <property type="toxin name" value="U1-theraphotoxin-Spl1a"/>
</dbReference>
<dbReference type="EvolutionaryTrace" id="K7N5K9"/>
<dbReference type="GO" id="GO:0005576">
    <property type="term" value="C:extracellular region"/>
    <property type="evidence" value="ECO:0007669"/>
    <property type="project" value="UniProtKB-SubCell"/>
</dbReference>
<dbReference type="GO" id="GO:0099106">
    <property type="term" value="F:ion channel regulator activity"/>
    <property type="evidence" value="ECO:0007669"/>
    <property type="project" value="UniProtKB-KW"/>
</dbReference>
<dbReference type="GO" id="GO:0090729">
    <property type="term" value="F:toxin activity"/>
    <property type="evidence" value="ECO:0007669"/>
    <property type="project" value="UniProtKB-KW"/>
</dbReference>
<sequence length="94" mass="10749">MIFLLPSIISVMLLAEPVLMLGDTEDADLMEMVQLSRPFFNPIIRAVELVELREERQRDCGHLHDPCPNDRPGHRTCCIGLQCRYGKCLVRVGR</sequence>
<feature type="signal peptide" evidence="2">
    <location>
        <begin position="1"/>
        <end position="22"/>
    </location>
</feature>
<feature type="propeptide" id="PRO_0000424392" evidence="4">
    <location>
        <begin position="23"/>
        <end position="58"/>
    </location>
</feature>
<feature type="chain" id="PRO_0000424393" description="U1-theraphotoxin-Sp1a" evidence="7">
    <location>
        <begin position="59"/>
        <end position="92"/>
    </location>
</feature>
<feature type="modified residue" description="Valine amide" evidence="1">
    <location>
        <position position="92"/>
    </location>
</feature>
<feature type="disulfide bond" evidence="4 8">
    <location>
        <begin position="60"/>
        <end position="78"/>
    </location>
</feature>
<feature type="disulfide bond" evidence="4 8">
    <location>
        <begin position="67"/>
        <end position="83"/>
    </location>
</feature>
<feature type="disulfide bond" evidence="4 8">
    <location>
        <begin position="77"/>
        <end position="88"/>
    </location>
</feature>
<feature type="strand" evidence="9">
    <location>
        <begin position="81"/>
        <end position="84"/>
    </location>
</feature>
<feature type="strand" evidence="9">
    <location>
        <begin position="87"/>
        <end position="90"/>
    </location>
</feature>
<proteinExistence type="evidence at protein level"/>
<protein>
    <recommendedName>
        <fullName evidence="6">U1-theraphotoxin-Sp1a</fullName>
        <shortName evidence="6">U1-TRTX-Sp1a</shortName>
    </recommendedName>
    <alternativeName>
        <fullName evidence="5">Orally active insecticidal peptide 1</fullName>
        <shortName evidence="5">OAIP-1</shortName>
    </alternativeName>
</protein>
<keyword id="KW-0002">3D-structure</keyword>
<keyword id="KW-0027">Amidation</keyword>
<keyword id="KW-0903">Direct protein sequencing</keyword>
<keyword id="KW-1015">Disulfide bond</keyword>
<keyword id="KW-0872">Ion channel impairing toxin</keyword>
<keyword id="KW-0960">Knottin</keyword>
<keyword id="KW-0964">Secreted</keyword>
<keyword id="KW-0732">Signal</keyword>
<keyword id="KW-0800">Toxin</keyword>
<comment type="function">
    <text evidence="3 4">Probable ion channel inhibitor. Shows insecticidal activity. Acts synergistically with the neonicotinoid insecticide imidacloprid. Is neither a repellent that repels insects nor an attractant that is preferentially consumed by insects. Is very stable.</text>
</comment>
<comment type="subcellular location">
    <subcellularLocation>
        <location evidence="3">Secreted</location>
    </subcellularLocation>
</comment>
<comment type="tissue specificity">
    <text evidence="7">Expressed by the venom gland.</text>
</comment>
<comment type="domain">
    <text evidence="4">The presence of a 'disulfide through disulfide knot' structurally defines this protein as a knottin.</text>
</comment>
<comment type="toxic dose">
    <text evidence="4">LD(50) is 1.84 +-0.8 nmol/g in mealworm.</text>
</comment>
<comment type="toxic dose">
    <text evidence="4">LD(50) is 170.5 +- 0.2 nmol/g when orally administered into mealworm.</text>
</comment>
<comment type="toxic dose">
    <text evidence="4">LD(50) is 104.2 +-0.6 pmol/g when orally administred into the cotton bollworm H.armigera.</text>
</comment>
<comment type="similarity">
    <text>Belongs to the neurotoxin 14 (magi-1) family. OAIP-1 subfamily.</text>
</comment>
<organism>
    <name type="scientific">Selenotypus plumipes</name>
    <name type="common">Australian featherleg tarantula</name>
    <dbReference type="NCBI Taxonomy" id="1395661"/>
    <lineage>
        <taxon>Eukaryota</taxon>
        <taxon>Metazoa</taxon>
        <taxon>Ecdysozoa</taxon>
        <taxon>Arthropoda</taxon>
        <taxon>Chelicerata</taxon>
        <taxon>Arachnida</taxon>
        <taxon>Araneae</taxon>
        <taxon>Mygalomorphae</taxon>
        <taxon>Theraphosidae</taxon>
        <taxon>Selenotypus</taxon>
    </lineage>
</organism>
<reference key="1">
    <citation type="journal article" date="2013" name="PLoS ONE">
        <title>SVM-based prediction of propeptide cleavage sites in spider toxins identifies toxin innovation in an australian tarantula.</title>
        <authorList>
            <person name="Wong E.S."/>
            <person name="Hardy M.C."/>
            <person name="Wood D."/>
            <person name="Bailey T."/>
            <person name="King G.F."/>
        </authorList>
    </citation>
    <scope>NUCLEOTIDE SEQUENCE [MRNA]</scope>
    <scope>PARTIAL PROTEIN SEQUENCE</scope>
    <scope>FUNCTION</scope>
    <scope>BIOASSAY</scope>
    <scope>SUBCELLULAR LOCATION</scope>
    <source>
        <tissue>Venom</tissue>
        <tissue>Venom gland</tissue>
    </source>
</reference>
<reference key="2">
    <citation type="journal article" date="2013" name="PLoS ONE">
        <title>Isolation of an orally active insecticidal toxin from the venom of an Australian tarantula.</title>
        <authorList>
            <person name="Hardy M.C."/>
            <person name="Daly N.L."/>
            <person name="Mobli M."/>
            <person name="Morales R.A."/>
            <person name="King G.F."/>
        </authorList>
    </citation>
    <scope>PROTEIN SEQUENCE OF 59-90</scope>
    <scope>FUNCTION</scope>
    <scope>BIOASSAY</scope>
    <scope>SYNTHESIS OF 59-92</scope>
    <scope>TOXIC DOSE</scope>
    <scope>STRUCTURE BY NMR OF 59-91</scope>
    <scope>DISULFIDE BONDS</scope>
    <source>
        <tissue>Venom</tissue>
        <tissue>Venom gland</tissue>
    </source>
</reference>